<protein>
    <recommendedName>
        <fullName evidence="3">Large envelope protein</fullName>
    </recommendedName>
    <alternativeName>
        <fullName evidence="3">L glycoprotein</fullName>
    </alternativeName>
    <alternativeName>
        <fullName evidence="3">L-HBsAg</fullName>
        <shortName evidence="3">LHB</shortName>
    </alternativeName>
    <alternativeName>
        <fullName evidence="3">Large S protein</fullName>
    </alternativeName>
    <alternativeName>
        <fullName evidence="3">Large surface protein</fullName>
    </alternativeName>
    <alternativeName>
        <fullName evidence="3">Major surface antigen</fullName>
    </alternativeName>
</protein>
<proteinExistence type="inferred from homology"/>
<dbReference type="EMBL" id="AF046996">
    <property type="protein sequence ID" value="AAC16905.1"/>
    <property type="molecule type" value="Genomic_DNA"/>
</dbReference>
<dbReference type="EMBL" id="AF046996">
    <property type="protein sequence ID" value="AAC16906.1"/>
    <property type="status" value="ALT_INIT"/>
    <property type="molecule type" value="Genomic_DNA"/>
</dbReference>
<dbReference type="EMBL" id="AY226578">
    <property type="protein sequence ID" value="AAO74856.1"/>
    <property type="molecule type" value="Genomic_DNA"/>
</dbReference>
<dbReference type="EMBL" id="AY226578">
    <property type="protein sequence ID" value="AAO74857.1"/>
    <property type="status" value="ALT_INIT"/>
    <property type="molecule type" value="Genomic_DNA"/>
</dbReference>
<dbReference type="RefSeq" id="YP_009175035.1">
    <property type="nucleotide sequence ID" value="NC_028129.1"/>
</dbReference>
<dbReference type="RefSeq" id="YP_009175036.1">
    <property type="nucleotide sequence ID" value="NC_028129.1"/>
</dbReference>
<dbReference type="SMR" id="O71305"/>
<dbReference type="GlyCosmos" id="O71305">
    <property type="glycosylation" value="1 site, No reported glycans"/>
</dbReference>
<dbReference type="KEGG" id="vg:26101581"/>
<dbReference type="KEGG" id="vg:26101584"/>
<dbReference type="Proteomes" id="UP000008599">
    <property type="component" value="Segment"/>
</dbReference>
<dbReference type="Proteomes" id="UP000163759">
    <property type="component" value="Segment"/>
</dbReference>
<dbReference type="GO" id="GO:0016020">
    <property type="term" value="C:membrane"/>
    <property type="evidence" value="ECO:0007669"/>
    <property type="project" value="UniProtKB-UniRule"/>
</dbReference>
<dbReference type="GO" id="GO:0019031">
    <property type="term" value="C:viral envelope"/>
    <property type="evidence" value="ECO:0007669"/>
    <property type="project" value="UniProtKB-KW"/>
</dbReference>
<dbReference type="GO" id="GO:0055036">
    <property type="term" value="C:virion membrane"/>
    <property type="evidence" value="ECO:0007669"/>
    <property type="project" value="UniProtKB-SubCell"/>
</dbReference>
<dbReference type="GO" id="GO:0075513">
    <property type="term" value="P:caveolin-mediated endocytosis of virus by host cell"/>
    <property type="evidence" value="ECO:0007669"/>
    <property type="project" value="UniProtKB-KW"/>
</dbReference>
<dbReference type="GO" id="GO:0039654">
    <property type="term" value="P:fusion of virus membrane with host endosome membrane"/>
    <property type="evidence" value="ECO:0007669"/>
    <property type="project" value="UniProtKB-KW"/>
</dbReference>
<dbReference type="GO" id="GO:0019062">
    <property type="term" value="P:virion attachment to host cell"/>
    <property type="evidence" value="ECO:0007669"/>
    <property type="project" value="UniProtKB-UniRule"/>
</dbReference>
<dbReference type="HAMAP" id="MF_04075">
    <property type="entry name" value="HBV_HBSAG"/>
    <property type="match status" value="1"/>
</dbReference>
<dbReference type="InterPro" id="IPR000349">
    <property type="entry name" value="HBV_HBSAG"/>
</dbReference>
<dbReference type="Pfam" id="PF00695">
    <property type="entry name" value="vMSA"/>
    <property type="match status" value="1"/>
</dbReference>
<gene>
    <name evidence="3" type="primary">S</name>
</gene>
<organism>
    <name type="scientific">Woolly monkey hepatitis B virus (isolate Louisville)</name>
    <name type="common">WMHBV</name>
    <dbReference type="NCBI Taxonomy" id="490134"/>
    <lineage>
        <taxon>Viruses</taxon>
        <taxon>Riboviria</taxon>
        <taxon>Pararnavirae</taxon>
        <taxon>Artverviricota</taxon>
        <taxon>Revtraviricetes</taxon>
        <taxon>Blubervirales</taxon>
        <taxon>Hepadnaviridae</taxon>
        <taxon>Orthohepadnavirus</taxon>
        <taxon>Woolly monkey hepatitis B virus</taxon>
    </lineage>
</organism>
<sequence length="391" mass="42557">MGLNQSTFNPLGFFPSHQLDPLFKANAGSADWDKNPNKDPWPQAHDTAVGAFGPGLVPPHGGLLGWSSQAQGLSVTVPDTPPPPSTNRDKGRKPTPATPPLRDTHPQAMTWNTSSFQSYLQNPKVRGLYFPAGGSTSSIVNPVPTTASTTSSSFSTTGVPVSTMDITSSGFLGPLLALQAVFFLLTKILTMPQSLDSLWTSLNFLGGTPACPGLNSQSPTSSHSPTCCPPTCPGYRWMCLRRSIIFLFILLLCLIFLLVLLDYQGMLPVCPLLPTVTGTTTTTGPCRTCTPIVPGISSYPSCCCTKPTDGNCTCIPIPSSWAFAKFLWDWALARFSWLNSLLPFVQWFAGLSPTVWLLVIWMMWFWGPSLFSILSPFLPLLPLFFWLWAYI</sequence>
<evidence type="ECO:0000250" key="1">
    <source>
        <dbReference type="UniProtKB" id="P03138"/>
    </source>
</evidence>
<evidence type="ECO:0000250" key="2">
    <source>
        <dbReference type="UniProtKB" id="P03141"/>
    </source>
</evidence>
<evidence type="ECO:0000255" key="3">
    <source>
        <dbReference type="HAMAP-Rule" id="MF_04075"/>
    </source>
</evidence>
<evidence type="ECO:0000256" key="4">
    <source>
        <dbReference type="SAM" id="MobiDB-lite"/>
    </source>
</evidence>
<evidence type="ECO:0000305" key="5"/>
<comment type="function">
    <text evidence="3">The large envelope protein exists in two topological conformations, one which is termed 'external' or Le-HBsAg and the other 'internal' or Li-HBsAg. In its external conformation the protein attaches the virus to cell receptors and thereby initiating infection. This interaction determines the species specificity and liver tropism. This attachment induces virion internalization predominantly through caveolin-mediated endocytosis. The large envelope protein also assures fusion between virion membrane and endosomal membrane. In its internal conformation the protein plays a role in virion morphogenesis and mediates the contact with the nucleocapsid like a matrix protein.</text>
</comment>
<comment type="function">
    <text evidence="3">The middle envelope protein plays an important role in the budding of the virion. It is involved in the induction of budding in a nucleocapsid independent way. In this process the majority of envelope proteins bud to form subviral lipoprotein particles of 22 nm of diameter that do not contain a nucleocapsid.</text>
</comment>
<comment type="subunit">
    <molecule>Isoform L</molecule>
    <text evidence="2">In its internal form (Li-HBsAg), interacts with the capsid protein and with the isoform S. Interacts with host chaperone CANX.</text>
</comment>
<comment type="subunit">
    <molecule>Isoform M</molecule>
    <text evidence="2">Associates with host chaperone CANX through its pre-S2 N glycan; this association may be essential for isoform M proper secretion.</text>
</comment>
<comment type="subunit">
    <molecule>Isoform S</molecule>
    <text evidence="2">Interacts with isoform L. Interacts with the antigens of satellite virus HDV (HDVAgs); this interaction is required for encapsidation of HDV genomic RNA.</text>
</comment>
<comment type="subcellular location">
    <subcellularLocation>
        <location evidence="3">Virion membrane</location>
    </subcellularLocation>
</comment>
<comment type="alternative products">
    <event type="alternative splicing"/>
    <event type="alternative initiation"/>
    <isoform>
        <id>O71305-1</id>
        <name>L</name>
        <name>Large envelope protein</name>
        <name>LHB</name>
        <name>L-HBsAg</name>
        <sequence type="displayed"/>
    </isoform>
    <isoform>
        <id>O71305-2</id>
        <name>M</name>
        <name>Middle envelope protein</name>
        <name>MHB</name>
        <name>M-HBsAg</name>
        <sequence type="described" ref="VSP_031471"/>
    </isoform>
    <isoform>
        <id>O71305-3</id>
        <name>S</name>
        <name>Small envelope protein</name>
        <name>SHB</name>
        <name>S-HBsAg</name>
        <sequence type="described" ref="VSP_031470"/>
    </isoform>
</comment>
<comment type="domain">
    <text evidence="3">The large envelope protein is synthesized with the pre-S region at the cytosolic side of the endoplasmic reticulum and, hence will be within the virion after budding. Therefore the pre-S region is not N-glycosylated. Later a post-translational translocation of N-terminal pre-S and TM1 domains occur in about 50% of proteins at the virion surface. These molecules change their topology by an unknown mechanism, resulting in exposure of pre-S region at virion surface. For isoform M in contrast, the pre-S2 region is translocated cotranslationally to the endoplasmic reticulum lumen and is N-glycosylated.</text>
</comment>
<comment type="PTM">
    <text evidence="1 3">Isoform M is N-terminally acetylated by host at a ratio of 90%, and N-glycosylated by host at the pre-S2 region.</text>
</comment>
<comment type="PTM">
    <text evidence="3">Myristoylated.</text>
</comment>
<comment type="similarity">
    <text evidence="3">Belongs to the orthohepadnavirus major surface antigen family.</text>
</comment>
<comment type="sequence caution" evidence="5">
    <conflict type="erroneous initiation">
        <sequence resource="EMBL-CDS" id="AAC16906"/>
    </conflict>
</comment>
<comment type="sequence caution" evidence="5">
    <conflict type="erroneous initiation">
        <sequence resource="EMBL-CDS" id="AAO74857"/>
    </conflict>
</comment>
<organismHost>
    <name type="scientific">Lagothrix lagotricha</name>
    <name type="common">Brown woolly monkey</name>
    <name type="synonym">Humboldt's woolly monkey</name>
    <dbReference type="NCBI Taxonomy" id="9519"/>
</organismHost>
<feature type="initiator methionine" description="Removed; by host" evidence="3">
    <location>
        <position position="1"/>
    </location>
</feature>
<feature type="chain" id="PRO_0000319294" description="Large envelope protein" evidence="3">
    <location>
        <begin position="2"/>
        <end position="391"/>
    </location>
</feature>
<feature type="topological domain" description="Intravirion; in internal conformation" evidence="3">
    <location>
        <begin position="2"/>
        <end position="242"/>
    </location>
</feature>
<feature type="topological domain" description="Virion surface; in external conformation" evidence="3">
    <location>
        <begin position="2"/>
        <end position="170"/>
    </location>
</feature>
<feature type="transmembrane region" description="Helical; Name=TM1; Note=In external conformation" evidence="3">
    <location>
        <begin position="171"/>
        <end position="191"/>
    </location>
</feature>
<feature type="topological domain" description="Intravirion; in external conformation" evidence="3">
    <location>
        <begin position="192"/>
        <end position="242"/>
    </location>
</feature>
<feature type="transmembrane region" description="Helical; Name=TM2" evidence="3">
    <location>
        <begin position="243"/>
        <end position="263"/>
    </location>
</feature>
<feature type="topological domain" description="Virion surface" evidence="3">
    <location>
        <begin position="264"/>
        <end position="339"/>
    </location>
</feature>
<feature type="transmembrane region" description="Helical" evidence="3">
    <location>
        <begin position="340"/>
        <end position="360"/>
    </location>
</feature>
<feature type="topological domain" description="Intravirion" evidence="3">
    <location>
        <begin position="361"/>
        <end position="366"/>
    </location>
</feature>
<feature type="transmembrane region" description="Helical; Name=TM3" evidence="3">
    <location>
        <begin position="367"/>
        <end position="389"/>
    </location>
</feature>
<feature type="topological domain" description="Virion surface" evidence="3">
    <location>
        <begin position="390"/>
        <end position="391"/>
    </location>
</feature>
<feature type="region of interest" description="Pre-S" evidence="3">
    <location>
        <begin position="2"/>
        <end position="163"/>
    </location>
</feature>
<feature type="region of interest" description="Pre-S1" evidence="3">
    <location>
        <begin position="2"/>
        <end position="108"/>
    </location>
</feature>
<feature type="region of interest" description="Disordered" evidence="4">
    <location>
        <begin position="73"/>
        <end position="107"/>
    </location>
</feature>
<feature type="region of interest" description="Pre-S2" evidence="3">
    <location>
        <begin position="109"/>
        <end position="163"/>
    </location>
</feature>
<feature type="lipid moiety-binding region" description="N-myristoyl glycine; by host" evidence="3">
    <location>
        <position position="2"/>
    </location>
</feature>
<feature type="glycosylation site" description="N-linked (GlcNAc...) asparagine; by host" evidence="3">
    <location>
        <position position="311"/>
    </location>
</feature>
<feature type="splice variant" id="VSP_031470" description="In isoform S." evidence="5">
    <location>
        <begin position="1"/>
        <end position="163"/>
    </location>
</feature>
<feature type="splice variant" id="VSP_031471" description="In isoform M." evidence="5">
    <location>
        <begin position="1"/>
        <end position="108"/>
    </location>
</feature>
<feature type="modified residue" description="N-acetylmethionine" evidence="1">
    <location sequence="O71305-2">
        <position position="1"/>
    </location>
</feature>
<accession>O71305</accession>
<accession>O92934</accession>
<reference key="1">
    <citation type="journal article" date="1998" name="Proc. Natl. Acad. Sci. U.S.A.">
        <title>Isolation of a hepadnavirus from the woolly monkey, a New World primate.</title>
        <authorList>
            <person name="Lanford R.E."/>
            <person name="Chavez D."/>
            <person name="Brasky K.M."/>
            <person name="Burns R.B. III"/>
            <person name="Rico-Hesse R."/>
        </authorList>
    </citation>
    <scope>NUCLEOTIDE SEQUENCE [GENOMIC DNA]</scope>
</reference>
<reference key="2">
    <citation type="journal article" date="2003" name="J. Virol.">
        <title>An infectious clone of woolly monkey hepatitis B virus.</title>
        <authorList>
            <person name="Lanford R.E."/>
            <person name="Chavez D."/>
            <person name="Barrera A."/>
            <person name="Brasky K.M."/>
        </authorList>
    </citation>
    <scope>NUCLEOTIDE SEQUENCE [GENOMIC DNA]</scope>
</reference>
<reference key="3">
    <citation type="journal article" date="1996" name="Intervirology">
        <title>Functions of the large hepatitis B virus surface protein in viral particle morphogenesis.</title>
        <authorList>
            <person name="Bruss V."/>
            <person name="Gerhardt E."/>
            <person name="Vieluf K."/>
            <person name="Wunderlich G."/>
        </authorList>
    </citation>
    <scope>REVIEW</scope>
</reference>
<reference key="4">
    <citation type="journal article" date="1998" name="Adv. Exp. Med. Biol.">
        <title>Role of glycan processing in hepatitis B virus envelope protein trafficking.</title>
        <authorList>
            <person name="Block T.M."/>
            <person name="Lu X."/>
            <person name="Mehta A."/>
            <person name="Park J."/>
            <person name="Blumberg B.S."/>
            <person name="Dwek R."/>
        </authorList>
    </citation>
    <scope>REVIEW</scope>
</reference>
<reference key="5">
    <citation type="journal article" date="2004" name="Virus Res.">
        <title>Envelopment of the hepatitis B virus nucleocapsid.</title>
        <authorList>
            <person name="Bruss V."/>
        </authorList>
    </citation>
    <scope>REVIEW</scope>
</reference>
<reference key="6">
    <citation type="journal article" date="2006" name="Cancer Sci.">
        <title>Hepatitis B virus pre-S mutants, endoplasmic reticulum stress and hepatocarcinogenesis.</title>
        <authorList>
            <person name="Wang H.C."/>
            <person name="Huang W."/>
            <person name="Lai M.D."/>
            <person name="Su I.J."/>
        </authorList>
    </citation>
    <scope>REVIEW</scope>
</reference>
<keyword id="KW-0007">Acetylation</keyword>
<keyword id="KW-0024">Alternative initiation</keyword>
<keyword id="KW-0025">Alternative splicing</keyword>
<keyword id="KW-1166">Caveolin-mediated endocytosis of virus by host</keyword>
<keyword id="KW-1170">Fusion of virus membrane with host endosomal membrane</keyword>
<keyword id="KW-1168">Fusion of virus membrane with host membrane</keyword>
<keyword id="KW-0325">Glycoprotein</keyword>
<keyword id="KW-0945">Host-virus interaction</keyword>
<keyword id="KW-0449">Lipoprotein</keyword>
<keyword id="KW-0472">Membrane</keyword>
<keyword id="KW-0519">Myristate</keyword>
<keyword id="KW-0812">Transmembrane</keyword>
<keyword id="KW-1133">Transmembrane helix</keyword>
<keyword id="KW-1161">Viral attachment to host cell</keyword>
<keyword id="KW-0261">Viral envelope protein</keyword>
<keyword id="KW-1162">Viral penetration into host cytoplasm</keyword>
<keyword id="KW-0946">Virion</keyword>
<keyword id="KW-1164">Virus endocytosis by host</keyword>
<keyword id="KW-1160">Virus entry into host cell</keyword>
<name>HBSAG_WMHBV</name>